<proteinExistence type="inferred from homology"/>
<gene>
    <name evidence="1" type="primary">ruvA</name>
    <name type="ordered locus">MS0712</name>
</gene>
<keyword id="KW-0963">Cytoplasm</keyword>
<keyword id="KW-0227">DNA damage</keyword>
<keyword id="KW-0233">DNA recombination</keyword>
<keyword id="KW-0234">DNA repair</keyword>
<keyword id="KW-0238">DNA-binding</keyword>
<accession>Q65UP1</accession>
<protein>
    <recommendedName>
        <fullName evidence="1">Holliday junction branch migration complex subunit RuvA</fullName>
    </recommendedName>
</protein>
<organism>
    <name type="scientific">Mannheimia succiniciproducens (strain KCTC 0769BP / MBEL55E)</name>
    <dbReference type="NCBI Taxonomy" id="221988"/>
    <lineage>
        <taxon>Bacteria</taxon>
        <taxon>Pseudomonadati</taxon>
        <taxon>Pseudomonadota</taxon>
        <taxon>Gammaproteobacteria</taxon>
        <taxon>Pasteurellales</taxon>
        <taxon>Pasteurellaceae</taxon>
        <taxon>Basfia</taxon>
    </lineage>
</organism>
<comment type="function">
    <text evidence="1">The RuvA-RuvB-RuvC complex processes Holliday junction (HJ) DNA during genetic recombination and DNA repair, while the RuvA-RuvB complex plays an important role in the rescue of blocked DNA replication forks via replication fork reversal (RFR). RuvA specifically binds to HJ cruciform DNA, conferring on it an open structure. The RuvB hexamer acts as an ATP-dependent pump, pulling dsDNA into and through the RuvAB complex. HJ branch migration allows RuvC to scan DNA until it finds its consensus sequence, where it cleaves and resolves the cruciform DNA.</text>
</comment>
<comment type="subunit">
    <text evidence="1">Homotetramer. Forms an RuvA(8)-RuvB(12)-Holliday junction (HJ) complex. HJ DNA is sandwiched between 2 RuvA tetramers; dsDNA enters through RuvA and exits via RuvB. An RuvB hexamer assembles on each DNA strand where it exits the tetramer. Each RuvB hexamer is contacted by two RuvA subunits (via domain III) on 2 adjacent RuvB subunits; this complex drives branch migration. In the full resolvosome a probable DNA-RuvA(4)-RuvB(12)-RuvC(2) complex forms which resolves the HJ.</text>
</comment>
<comment type="subcellular location">
    <subcellularLocation>
        <location evidence="1">Cytoplasm</location>
    </subcellularLocation>
</comment>
<comment type="domain">
    <text evidence="1">Has three domains with a flexible linker between the domains II and III and assumes an 'L' shape. Domain III is highly mobile and contacts RuvB.</text>
</comment>
<comment type="similarity">
    <text evidence="1">Belongs to the RuvA family.</text>
</comment>
<comment type="sequence caution" evidence="2">
    <conflict type="erroneous initiation">
        <sequence resource="EMBL-CDS" id="AAU37319"/>
    </conflict>
    <text>Extended N-terminus.</text>
</comment>
<sequence>MIGRLQGILLEKQPPEILLDVHGIGYELLLPMTSFYNLPEIGQETVLFTHLVVREDAHLLFGFSAKTDRTLFRELIKTNGVGPKLALAILSAMSVNEFAYAIEHEELSKLVKIPGVGKKTAERLLVELKGKFKGIKQPDFFVESSHVGAVDPVTTSPEVPAEEAVAALMALGYKASDAEKMVKRIAKPHLTSEQLIREALKAAL</sequence>
<feature type="chain" id="PRO_0000094647" description="Holliday junction branch migration complex subunit RuvA">
    <location>
        <begin position="1"/>
        <end position="204"/>
    </location>
</feature>
<feature type="region of interest" description="Domain I" evidence="1">
    <location>
        <begin position="1"/>
        <end position="64"/>
    </location>
</feature>
<feature type="region of interest" description="Domain II" evidence="1">
    <location>
        <begin position="65"/>
        <end position="143"/>
    </location>
</feature>
<feature type="region of interest" description="Flexible linker" evidence="1">
    <location>
        <begin position="144"/>
        <end position="155"/>
    </location>
</feature>
<feature type="region of interest" description="Domain III" evidence="1">
    <location>
        <begin position="156"/>
        <end position="204"/>
    </location>
</feature>
<reference key="1">
    <citation type="journal article" date="2004" name="Nat. Biotechnol.">
        <title>The genome sequence of the capnophilic rumen bacterium Mannheimia succiniciproducens.</title>
        <authorList>
            <person name="Hong S.H."/>
            <person name="Kim J.S."/>
            <person name="Lee S.Y."/>
            <person name="In Y.H."/>
            <person name="Choi S.S."/>
            <person name="Rih J.-K."/>
            <person name="Kim C.H."/>
            <person name="Jeong H."/>
            <person name="Hur C.G."/>
            <person name="Kim J.J."/>
        </authorList>
    </citation>
    <scope>NUCLEOTIDE SEQUENCE [LARGE SCALE GENOMIC DNA]</scope>
    <source>
        <strain>KCTC 0769BP / MBEL55E</strain>
    </source>
</reference>
<dbReference type="EMBL" id="AE016827">
    <property type="protein sequence ID" value="AAU37319.1"/>
    <property type="status" value="ALT_INIT"/>
    <property type="molecule type" value="Genomic_DNA"/>
</dbReference>
<dbReference type="RefSeq" id="WP_011199891.1">
    <property type="nucleotide sequence ID" value="NC_006300.1"/>
</dbReference>
<dbReference type="SMR" id="Q65UP1"/>
<dbReference type="STRING" id="221988.MS0712"/>
<dbReference type="KEGG" id="msu:MS0712"/>
<dbReference type="eggNOG" id="COG0632">
    <property type="taxonomic scope" value="Bacteria"/>
</dbReference>
<dbReference type="HOGENOM" id="CLU_087936_0_0_6"/>
<dbReference type="OrthoDB" id="5293449at2"/>
<dbReference type="Proteomes" id="UP000000607">
    <property type="component" value="Chromosome"/>
</dbReference>
<dbReference type="GO" id="GO:0005737">
    <property type="term" value="C:cytoplasm"/>
    <property type="evidence" value="ECO:0007669"/>
    <property type="project" value="UniProtKB-SubCell"/>
</dbReference>
<dbReference type="GO" id="GO:0009379">
    <property type="term" value="C:Holliday junction helicase complex"/>
    <property type="evidence" value="ECO:0007669"/>
    <property type="project" value="InterPro"/>
</dbReference>
<dbReference type="GO" id="GO:0048476">
    <property type="term" value="C:Holliday junction resolvase complex"/>
    <property type="evidence" value="ECO:0007669"/>
    <property type="project" value="UniProtKB-UniRule"/>
</dbReference>
<dbReference type="GO" id="GO:0005524">
    <property type="term" value="F:ATP binding"/>
    <property type="evidence" value="ECO:0007669"/>
    <property type="project" value="InterPro"/>
</dbReference>
<dbReference type="GO" id="GO:0000400">
    <property type="term" value="F:four-way junction DNA binding"/>
    <property type="evidence" value="ECO:0007669"/>
    <property type="project" value="UniProtKB-UniRule"/>
</dbReference>
<dbReference type="GO" id="GO:0009378">
    <property type="term" value="F:four-way junction helicase activity"/>
    <property type="evidence" value="ECO:0007669"/>
    <property type="project" value="InterPro"/>
</dbReference>
<dbReference type="GO" id="GO:0006310">
    <property type="term" value="P:DNA recombination"/>
    <property type="evidence" value="ECO:0007669"/>
    <property type="project" value="UniProtKB-UniRule"/>
</dbReference>
<dbReference type="GO" id="GO:0006281">
    <property type="term" value="P:DNA repair"/>
    <property type="evidence" value="ECO:0007669"/>
    <property type="project" value="UniProtKB-UniRule"/>
</dbReference>
<dbReference type="CDD" id="cd14332">
    <property type="entry name" value="UBA_RuvA_C"/>
    <property type="match status" value="1"/>
</dbReference>
<dbReference type="FunFam" id="2.40.50.140:FF:000083">
    <property type="entry name" value="Holliday junction ATP-dependent DNA helicase RuvA"/>
    <property type="match status" value="1"/>
</dbReference>
<dbReference type="Gene3D" id="1.10.150.20">
    <property type="entry name" value="5' to 3' exonuclease, C-terminal subdomain"/>
    <property type="match status" value="1"/>
</dbReference>
<dbReference type="Gene3D" id="1.10.8.10">
    <property type="entry name" value="DNA helicase RuvA subunit, C-terminal domain"/>
    <property type="match status" value="1"/>
</dbReference>
<dbReference type="Gene3D" id="2.40.50.140">
    <property type="entry name" value="Nucleic acid-binding proteins"/>
    <property type="match status" value="1"/>
</dbReference>
<dbReference type="HAMAP" id="MF_00031">
    <property type="entry name" value="DNA_HJ_migration_RuvA"/>
    <property type="match status" value="1"/>
</dbReference>
<dbReference type="InterPro" id="IPR013849">
    <property type="entry name" value="DNA_helicase_Holl-junc_RuvA_I"/>
</dbReference>
<dbReference type="InterPro" id="IPR003583">
    <property type="entry name" value="Hlx-hairpin-Hlx_DNA-bd_motif"/>
</dbReference>
<dbReference type="InterPro" id="IPR012340">
    <property type="entry name" value="NA-bd_OB-fold"/>
</dbReference>
<dbReference type="InterPro" id="IPR000085">
    <property type="entry name" value="RuvA"/>
</dbReference>
<dbReference type="InterPro" id="IPR010994">
    <property type="entry name" value="RuvA_2-like"/>
</dbReference>
<dbReference type="InterPro" id="IPR011114">
    <property type="entry name" value="RuvA_C"/>
</dbReference>
<dbReference type="InterPro" id="IPR036267">
    <property type="entry name" value="RuvA_C_sf"/>
</dbReference>
<dbReference type="NCBIfam" id="TIGR00084">
    <property type="entry name" value="ruvA"/>
    <property type="match status" value="1"/>
</dbReference>
<dbReference type="Pfam" id="PF14520">
    <property type="entry name" value="HHH_5"/>
    <property type="match status" value="1"/>
</dbReference>
<dbReference type="Pfam" id="PF07499">
    <property type="entry name" value="RuvA_C"/>
    <property type="match status" value="1"/>
</dbReference>
<dbReference type="Pfam" id="PF01330">
    <property type="entry name" value="RuvA_N"/>
    <property type="match status" value="1"/>
</dbReference>
<dbReference type="SMART" id="SM00278">
    <property type="entry name" value="HhH1"/>
    <property type="match status" value="2"/>
</dbReference>
<dbReference type="SUPFAM" id="SSF46929">
    <property type="entry name" value="DNA helicase RuvA subunit, C-terminal domain"/>
    <property type="match status" value="1"/>
</dbReference>
<dbReference type="SUPFAM" id="SSF50249">
    <property type="entry name" value="Nucleic acid-binding proteins"/>
    <property type="match status" value="1"/>
</dbReference>
<dbReference type="SUPFAM" id="SSF47781">
    <property type="entry name" value="RuvA domain 2-like"/>
    <property type="match status" value="1"/>
</dbReference>
<evidence type="ECO:0000255" key="1">
    <source>
        <dbReference type="HAMAP-Rule" id="MF_00031"/>
    </source>
</evidence>
<evidence type="ECO:0000305" key="2"/>
<name>RUVA_MANSM</name>